<proteinExistence type="inferred from homology"/>
<organism>
    <name type="scientific">Pseudomonas putida (strain ATCC 47054 / DSM 6125 / CFBP 8728 / NCIMB 11950 / KT2440)</name>
    <dbReference type="NCBI Taxonomy" id="160488"/>
    <lineage>
        <taxon>Bacteria</taxon>
        <taxon>Pseudomonadati</taxon>
        <taxon>Pseudomonadota</taxon>
        <taxon>Gammaproteobacteria</taxon>
        <taxon>Pseudomonadales</taxon>
        <taxon>Pseudomonadaceae</taxon>
        <taxon>Pseudomonas</taxon>
    </lineage>
</organism>
<sequence length="430" mass="46833">MGKNVVVLGTQWGDEGKGKIVDLLTEHAAAVVRYQGGHNAGHTLVINGEKTVLHLIPSGILREGVQCLIGNGVVVAPDALMREITKLEEKGVPVRERLRISPAAPLILSYHVALDQAREKARGEAKIGTTGRGIGPAYEDKVARRGLRVGDLFHRERFAAKLGELLDYHNFQLVNYYKEPAIDFQQTLDECMAYAEQLKPMMLDVTAELHNLRRAGKDIMFEGAQGSLLDIDHGTYPYVTSSNTTAGGISTGSGVGPMYLDYILGITKAYTTRVGSGPFPTELFDETGATLAKRGHEFGSTTGRARRCGWFDAVILRRAIDVNSISGICLTKLDVLDGLETINICVGYKNENGAVIDAPSDADSYIGLEPVYEEMPGWSESTLGVKTLEELPQAARDYIKRIEELVGAPIDIISTGPDRNETIVLRHPFA</sequence>
<comment type="function">
    <text evidence="1">Plays an important role in the de novo pathway of purine nucleotide biosynthesis. Catalyzes the first committed step in the biosynthesis of AMP from IMP.</text>
</comment>
<comment type="catalytic activity">
    <reaction evidence="1">
        <text>IMP + L-aspartate + GTP = N(6)-(1,2-dicarboxyethyl)-AMP + GDP + phosphate + 2 H(+)</text>
        <dbReference type="Rhea" id="RHEA:15753"/>
        <dbReference type="ChEBI" id="CHEBI:15378"/>
        <dbReference type="ChEBI" id="CHEBI:29991"/>
        <dbReference type="ChEBI" id="CHEBI:37565"/>
        <dbReference type="ChEBI" id="CHEBI:43474"/>
        <dbReference type="ChEBI" id="CHEBI:57567"/>
        <dbReference type="ChEBI" id="CHEBI:58053"/>
        <dbReference type="ChEBI" id="CHEBI:58189"/>
        <dbReference type="EC" id="6.3.4.4"/>
    </reaction>
</comment>
<comment type="cofactor">
    <cofactor evidence="1">
        <name>Mg(2+)</name>
        <dbReference type="ChEBI" id="CHEBI:18420"/>
    </cofactor>
    <text evidence="1">Binds 1 Mg(2+) ion per subunit.</text>
</comment>
<comment type="pathway">
    <text evidence="1">Purine metabolism; AMP biosynthesis via de novo pathway; AMP from IMP: step 1/2.</text>
</comment>
<comment type="subunit">
    <text evidence="1">Homodimer.</text>
</comment>
<comment type="subcellular location">
    <subcellularLocation>
        <location evidence="1">Cytoplasm</location>
    </subcellularLocation>
</comment>
<comment type="similarity">
    <text evidence="1">Belongs to the adenylosuccinate synthetase family.</text>
</comment>
<gene>
    <name evidence="1" type="primary">purA</name>
    <name type="ordered locus">PP_4889</name>
</gene>
<name>PURA_PSEPK</name>
<feature type="chain" id="PRO_0000095214" description="Adenylosuccinate synthetase">
    <location>
        <begin position="1"/>
        <end position="430"/>
    </location>
</feature>
<feature type="active site" description="Proton acceptor" evidence="1">
    <location>
        <position position="14"/>
    </location>
</feature>
<feature type="active site" description="Proton donor" evidence="1">
    <location>
        <position position="42"/>
    </location>
</feature>
<feature type="binding site" evidence="1">
    <location>
        <begin position="13"/>
        <end position="19"/>
    </location>
    <ligand>
        <name>GTP</name>
        <dbReference type="ChEBI" id="CHEBI:37565"/>
    </ligand>
</feature>
<feature type="binding site" description="in other chain" evidence="1">
    <location>
        <begin position="14"/>
        <end position="17"/>
    </location>
    <ligand>
        <name>IMP</name>
        <dbReference type="ChEBI" id="CHEBI:58053"/>
        <note>ligand shared between dimeric partners</note>
    </ligand>
</feature>
<feature type="binding site" evidence="1">
    <location>
        <position position="14"/>
    </location>
    <ligand>
        <name>Mg(2+)</name>
        <dbReference type="ChEBI" id="CHEBI:18420"/>
    </ligand>
</feature>
<feature type="binding site" description="in other chain" evidence="1">
    <location>
        <begin position="39"/>
        <end position="42"/>
    </location>
    <ligand>
        <name>IMP</name>
        <dbReference type="ChEBI" id="CHEBI:58053"/>
        <note>ligand shared between dimeric partners</note>
    </ligand>
</feature>
<feature type="binding site" evidence="1">
    <location>
        <begin position="41"/>
        <end position="43"/>
    </location>
    <ligand>
        <name>GTP</name>
        <dbReference type="ChEBI" id="CHEBI:37565"/>
    </ligand>
</feature>
<feature type="binding site" evidence="1">
    <location>
        <position position="41"/>
    </location>
    <ligand>
        <name>Mg(2+)</name>
        <dbReference type="ChEBI" id="CHEBI:18420"/>
    </ligand>
</feature>
<feature type="binding site" description="in other chain" evidence="1">
    <location>
        <position position="130"/>
    </location>
    <ligand>
        <name>IMP</name>
        <dbReference type="ChEBI" id="CHEBI:58053"/>
        <note>ligand shared between dimeric partners</note>
    </ligand>
</feature>
<feature type="binding site" evidence="1">
    <location>
        <position position="144"/>
    </location>
    <ligand>
        <name>IMP</name>
        <dbReference type="ChEBI" id="CHEBI:58053"/>
        <note>ligand shared between dimeric partners</note>
    </ligand>
</feature>
<feature type="binding site" description="in other chain" evidence="1">
    <location>
        <position position="225"/>
    </location>
    <ligand>
        <name>IMP</name>
        <dbReference type="ChEBI" id="CHEBI:58053"/>
        <note>ligand shared between dimeric partners</note>
    </ligand>
</feature>
<feature type="binding site" description="in other chain" evidence="1">
    <location>
        <position position="240"/>
    </location>
    <ligand>
        <name>IMP</name>
        <dbReference type="ChEBI" id="CHEBI:58053"/>
        <note>ligand shared between dimeric partners</note>
    </ligand>
</feature>
<feature type="binding site" evidence="1">
    <location>
        <begin position="300"/>
        <end position="306"/>
    </location>
    <ligand>
        <name>substrate</name>
    </ligand>
</feature>
<feature type="binding site" description="in other chain" evidence="1">
    <location>
        <position position="304"/>
    </location>
    <ligand>
        <name>IMP</name>
        <dbReference type="ChEBI" id="CHEBI:58053"/>
        <note>ligand shared between dimeric partners</note>
    </ligand>
</feature>
<feature type="binding site" evidence="1">
    <location>
        <position position="306"/>
    </location>
    <ligand>
        <name>GTP</name>
        <dbReference type="ChEBI" id="CHEBI:37565"/>
    </ligand>
</feature>
<feature type="binding site" evidence="1">
    <location>
        <begin position="332"/>
        <end position="334"/>
    </location>
    <ligand>
        <name>GTP</name>
        <dbReference type="ChEBI" id="CHEBI:37565"/>
    </ligand>
</feature>
<feature type="binding site" evidence="1">
    <location>
        <begin position="414"/>
        <end position="416"/>
    </location>
    <ligand>
        <name>GTP</name>
        <dbReference type="ChEBI" id="CHEBI:37565"/>
    </ligand>
</feature>
<reference key="1">
    <citation type="journal article" date="2002" name="Environ. Microbiol.">
        <title>Complete genome sequence and comparative analysis of the metabolically versatile Pseudomonas putida KT2440.</title>
        <authorList>
            <person name="Nelson K.E."/>
            <person name="Weinel C."/>
            <person name="Paulsen I.T."/>
            <person name="Dodson R.J."/>
            <person name="Hilbert H."/>
            <person name="Martins dos Santos V.A.P."/>
            <person name="Fouts D.E."/>
            <person name="Gill S.R."/>
            <person name="Pop M."/>
            <person name="Holmes M."/>
            <person name="Brinkac L.M."/>
            <person name="Beanan M.J."/>
            <person name="DeBoy R.T."/>
            <person name="Daugherty S.C."/>
            <person name="Kolonay J.F."/>
            <person name="Madupu R."/>
            <person name="Nelson W.C."/>
            <person name="White O."/>
            <person name="Peterson J.D."/>
            <person name="Khouri H.M."/>
            <person name="Hance I."/>
            <person name="Chris Lee P."/>
            <person name="Holtzapple E.K."/>
            <person name="Scanlan D."/>
            <person name="Tran K."/>
            <person name="Moazzez A."/>
            <person name="Utterback T.R."/>
            <person name="Rizzo M."/>
            <person name="Lee K."/>
            <person name="Kosack D."/>
            <person name="Moestl D."/>
            <person name="Wedler H."/>
            <person name="Lauber J."/>
            <person name="Stjepandic D."/>
            <person name="Hoheisel J."/>
            <person name="Straetz M."/>
            <person name="Heim S."/>
            <person name="Kiewitz C."/>
            <person name="Eisen J.A."/>
            <person name="Timmis K.N."/>
            <person name="Duesterhoeft A."/>
            <person name="Tuemmler B."/>
            <person name="Fraser C.M."/>
        </authorList>
    </citation>
    <scope>NUCLEOTIDE SEQUENCE [LARGE SCALE GENOMIC DNA]</scope>
    <source>
        <strain>ATCC 47054 / DSM 6125 / CFBP 8728 / NCIMB 11950 / KT2440</strain>
    </source>
</reference>
<keyword id="KW-0963">Cytoplasm</keyword>
<keyword id="KW-0342">GTP-binding</keyword>
<keyword id="KW-0436">Ligase</keyword>
<keyword id="KW-0460">Magnesium</keyword>
<keyword id="KW-0479">Metal-binding</keyword>
<keyword id="KW-0547">Nucleotide-binding</keyword>
<keyword id="KW-0658">Purine biosynthesis</keyword>
<keyword id="KW-1185">Reference proteome</keyword>
<dbReference type="EC" id="6.3.4.4" evidence="1"/>
<dbReference type="EMBL" id="AE015451">
    <property type="protein sequence ID" value="AAN70456.1"/>
    <property type="molecule type" value="Genomic_DNA"/>
</dbReference>
<dbReference type="RefSeq" id="NP_746992.1">
    <property type="nucleotide sequence ID" value="NC_002947.4"/>
</dbReference>
<dbReference type="RefSeq" id="WP_003249542.1">
    <property type="nucleotide sequence ID" value="NZ_CP169744.1"/>
</dbReference>
<dbReference type="SMR" id="Q88DD8"/>
<dbReference type="STRING" id="160488.PP_4889"/>
<dbReference type="PaxDb" id="160488-PP_4889"/>
<dbReference type="KEGG" id="ppu:PP_4889"/>
<dbReference type="PATRIC" id="fig|160488.4.peg.5224"/>
<dbReference type="eggNOG" id="COG0104">
    <property type="taxonomic scope" value="Bacteria"/>
</dbReference>
<dbReference type="HOGENOM" id="CLU_029848_0_0_6"/>
<dbReference type="OrthoDB" id="9807553at2"/>
<dbReference type="PhylomeDB" id="Q88DD8"/>
<dbReference type="BioCyc" id="PPUT160488:G1G01-5231-MONOMER"/>
<dbReference type="UniPathway" id="UPA00075">
    <property type="reaction ID" value="UER00335"/>
</dbReference>
<dbReference type="Proteomes" id="UP000000556">
    <property type="component" value="Chromosome"/>
</dbReference>
<dbReference type="GO" id="GO:0005737">
    <property type="term" value="C:cytoplasm"/>
    <property type="evidence" value="ECO:0007669"/>
    <property type="project" value="UniProtKB-SubCell"/>
</dbReference>
<dbReference type="GO" id="GO:0004019">
    <property type="term" value="F:adenylosuccinate synthase activity"/>
    <property type="evidence" value="ECO:0007669"/>
    <property type="project" value="UniProtKB-UniRule"/>
</dbReference>
<dbReference type="GO" id="GO:0005525">
    <property type="term" value="F:GTP binding"/>
    <property type="evidence" value="ECO:0007669"/>
    <property type="project" value="UniProtKB-UniRule"/>
</dbReference>
<dbReference type="GO" id="GO:0000287">
    <property type="term" value="F:magnesium ion binding"/>
    <property type="evidence" value="ECO:0007669"/>
    <property type="project" value="UniProtKB-UniRule"/>
</dbReference>
<dbReference type="GO" id="GO:0044208">
    <property type="term" value="P:'de novo' AMP biosynthetic process"/>
    <property type="evidence" value="ECO:0007669"/>
    <property type="project" value="UniProtKB-UniRule"/>
</dbReference>
<dbReference type="GO" id="GO:0046040">
    <property type="term" value="P:IMP metabolic process"/>
    <property type="evidence" value="ECO:0007669"/>
    <property type="project" value="TreeGrafter"/>
</dbReference>
<dbReference type="CDD" id="cd03108">
    <property type="entry name" value="AdSS"/>
    <property type="match status" value="1"/>
</dbReference>
<dbReference type="FunFam" id="1.10.300.10:FF:000001">
    <property type="entry name" value="Adenylosuccinate synthetase"/>
    <property type="match status" value="1"/>
</dbReference>
<dbReference type="FunFam" id="3.90.170.10:FF:000001">
    <property type="entry name" value="Adenylosuccinate synthetase"/>
    <property type="match status" value="1"/>
</dbReference>
<dbReference type="Gene3D" id="3.40.440.10">
    <property type="entry name" value="Adenylosuccinate Synthetase, subunit A, domain 1"/>
    <property type="match status" value="1"/>
</dbReference>
<dbReference type="Gene3D" id="1.10.300.10">
    <property type="entry name" value="Adenylosuccinate Synthetase, subunit A, domain 2"/>
    <property type="match status" value="1"/>
</dbReference>
<dbReference type="Gene3D" id="3.90.170.10">
    <property type="entry name" value="Adenylosuccinate Synthetase, subunit A, domain 3"/>
    <property type="match status" value="1"/>
</dbReference>
<dbReference type="HAMAP" id="MF_00011">
    <property type="entry name" value="Adenylosucc_synth"/>
    <property type="match status" value="1"/>
</dbReference>
<dbReference type="InterPro" id="IPR018220">
    <property type="entry name" value="Adenylosuccin_syn_GTP-bd"/>
</dbReference>
<dbReference type="InterPro" id="IPR033128">
    <property type="entry name" value="Adenylosuccin_syn_Lys_AS"/>
</dbReference>
<dbReference type="InterPro" id="IPR042109">
    <property type="entry name" value="Adenylosuccinate_synth_dom1"/>
</dbReference>
<dbReference type="InterPro" id="IPR042110">
    <property type="entry name" value="Adenylosuccinate_synth_dom2"/>
</dbReference>
<dbReference type="InterPro" id="IPR042111">
    <property type="entry name" value="Adenylosuccinate_synth_dom3"/>
</dbReference>
<dbReference type="InterPro" id="IPR001114">
    <property type="entry name" value="Adenylosuccinate_synthetase"/>
</dbReference>
<dbReference type="InterPro" id="IPR027417">
    <property type="entry name" value="P-loop_NTPase"/>
</dbReference>
<dbReference type="NCBIfam" id="NF002223">
    <property type="entry name" value="PRK01117.1"/>
    <property type="match status" value="1"/>
</dbReference>
<dbReference type="NCBIfam" id="TIGR00184">
    <property type="entry name" value="purA"/>
    <property type="match status" value="1"/>
</dbReference>
<dbReference type="PANTHER" id="PTHR11846">
    <property type="entry name" value="ADENYLOSUCCINATE SYNTHETASE"/>
    <property type="match status" value="1"/>
</dbReference>
<dbReference type="PANTHER" id="PTHR11846:SF0">
    <property type="entry name" value="ADENYLOSUCCINATE SYNTHETASE"/>
    <property type="match status" value="1"/>
</dbReference>
<dbReference type="Pfam" id="PF00709">
    <property type="entry name" value="Adenylsucc_synt"/>
    <property type="match status" value="1"/>
</dbReference>
<dbReference type="SMART" id="SM00788">
    <property type="entry name" value="Adenylsucc_synt"/>
    <property type="match status" value="1"/>
</dbReference>
<dbReference type="SUPFAM" id="SSF52540">
    <property type="entry name" value="P-loop containing nucleoside triphosphate hydrolases"/>
    <property type="match status" value="1"/>
</dbReference>
<dbReference type="PROSITE" id="PS01266">
    <property type="entry name" value="ADENYLOSUCCIN_SYN_1"/>
    <property type="match status" value="1"/>
</dbReference>
<dbReference type="PROSITE" id="PS00513">
    <property type="entry name" value="ADENYLOSUCCIN_SYN_2"/>
    <property type="match status" value="1"/>
</dbReference>
<protein>
    <recommendedName>
        <fullName evidence="1">Adenylosuccinate synthetase</fullName>
        <shortName evidence="1">AMPSase</shortName>
        <shortName evidence="1">AdSS</shortName>
        <ecNumber evidence="1">6.3.4.4</ecNumber>
    </recommendedName>
    <alternativeName>
        <fullName evidence="1">IMP--aspartate ligase</fullName>
    </alternativeName>
</protein>
<evidence type="ECO:0000255" key="1">
    <source>
        <dbReference type="HAMAP-Rule" id="MF_00011"/>
    </source>
</evidence>
<accession>Q88DD8</accession>